<evidence type="ECO:0000250" key="1">
    <source>
        <dbReference type="UniProtKB" id="O14777"/>
    </source>
</evidence>
<evidence type="ECO:0000255" key="2"/>
<evidence type="ECO:0000269" key="3">
    <source>
    </source>
</evidence>
<evidence type="ECO:0000305" key="4"/>
<evidence type="ECO:0007744" key="5">
    <source>
    </source>
</evidence>
<gene>
    <name type="primary">Ndc80</name>
    <name type="synonym">Hec1</name>
    <name type="synonym">Kntc2</name>
</gene>
<comment type="function">
    <text evidence="1">Acts as a component of the essential kinetochore-associated NDC80 complex, which is required for chromosome segregation and spindle checkpoint activity. Required for kinetochore integrity and the organization of stable microtubule binding sites in the outer plate of the kinetochore. The NDC80 complex synergistically enhances the affinity of the SKA1 complex for microtubules and may allow the NDC80 complex to track depolymerizing microtubules. Plays a role in chromosome congression and is essential for the end-on attachment of the kinetochores to spindle microtubules.</text>
</comment>
<comment type="subunit">
    <text evidence="1">Component of the NDC80 complex, which consists of NDC80/HEC1, CDCA1, SPBC24 and SPBC25. The NDC80 complex is formed by two subcomplexes composed of NDC80/HEC1-CDCA1 and SPBC24-SPBC25. Each subcomplex is formed by parallel interactions through the coiled-coil domains of individual subunits. Formation of a tetrameric complex is mediated by interactions between the C-terminal regions of both subunits of the NDC80/HEC1-CDCA1 subcomplex and the N-terminal regions of both subunits of the SPBC24-SPBC25 complex. The tetrameric NDC80 complex has an elongated rod-like structure with globular domains at either end. Interacts with NEK2 and ZWINT specifically during mitosis. Interacts with CENPH and MIS12. May interact with AURKB, PSMC2, PSMC5 and SMC1A. May interact with RB1 during G2 phase and mitosis. Interacts with CKAP5 (By similarity). Interacts with CDT1; leading to kinetochore localization of CDT1 (By similarity).</text>
</comment>
<comment type="subcellular location">
    <subcellularLocation>
        <location evidence="1">Nucleus</location>
    </subcellularLocation>
    <subcellularLocation>
        <location evidence="1">Chromosome</location>
        <location evidence="1">Centromere</location>
        <location evidence="1">Kinetochore</location>
    </subcellularLocation>
    <text evidence="1">Localizes to kinetochores from late prophase to anaphase. Localizes specifically to the outer plate of the kinetochore.</text>
</comment>
<comment type="tissue specificity">
    <text evidence="3">Expressed in spleen, testis and thymus.</text>
</comment>
<comment type="PTM">
    <text evidence="1">Phosphorylation begins in S phase of the cell cycle and peaks in mitosis. Phosphorylated by NEK2. Also phosphorylated by AURKA and AURKB.</text>
</comment>
<comment type="PTM">
    <text evidence="1">Acetylated at Lys-53 and Lys-59 by KAT5 during mitosis, promoting robust kinetochore-microtubule attachment. Deacetylated by SIRT1.</text>
</comment>
<comment type="similarity">
    <text evidence="4">Belongs to the NDC80/HEC1 family.</text>
</comment>
<accession>Q9D0F1</accession>
<accession>Q3TQT6</accession>
<accession>Q3UWM5</accession>
<accession>Q99P70</accession>
<keyword id="KW-0007">Acetylation</keyword>
<keyword id="KW-0131">Cell cycle</keyword>
<keyword id="KW-0132">Cell division</keyword>
<keyword id="KW-0137">Centromere</keyword>
<keyword id="KW-0158">Chromosome</keyword>
<keyword id="KW-0175">Coiled coil</keyword>
<keyword id="KW-0995">Kinetochore</keyword>
<keyword id="KW-0498">Mitosis</keyword>
<keyword id="KW-0539">Nucleus</keyword>
<keyword id="KW-0597">Phosphoprotein</keyword>
<keyword id="KW-1185">Reference proteome</keyword>
<organism>
    <name type="scientific">Mus musculus</name>
    <name type="common">Mouse</name>
    <dbReference type="NCBI Taxonomy" id="10090"/>
    <lineage>
        <taxon>Eukaryota</taxon>
        <taxon>Metazoa</taxon>
        <taxon>Chordata</taxon>
        <taxon>Craniata</taxon>
        <taxon>Vertebrata</taxon>
        <taxon>Euteleostomi</taxon>
        <taxon>Mammalia</taxon>
        <taxon>Eutheria</taxon>
        <taxon>Euarchontoglires</taxon>
        <taxon>Glires</taxon>
        <taxon>Rodentia</taxon>
        <taxon>Myomorpha</taxon>
        <taxon>Muroidea</taxon>
        <taxon>Muridae</taxon>
        <taxon>Murinae</taxon>
        <taxon>Mus</taxon>
        <taxon>Mus</taxon>
    </lineage>
</organism>
<protein>
    <recommendedName>
        <fullName>Kinetochore protein NDC80 homolog</fullName>
    </recommendedName>
    <alternativeName>
        <fullName>Kinetochore protein Hec1</fullName>
    </alternativeName>
    <alternativeName>
        <fullName>Kinetochore-associated protein 2</fullName>
    </alternativeName>
</protein>
<reference key="1">
    <citation type="journal article" date="2001" name="J. Cell Biol.">
        <title>The Ndc80p complex from Saccharomyces cerevisiae contains conserved centromere components and has a function in chromosome segregation.</title>
        <authorList>
            <person name="Wigge P.A."/>
            <person name="Kilmartin J.V."/>
        </authorList>
    </citation>
    <scope>NUCLEOTIDE SEQUENCE [MRNA]</scope>
</reference>
<reference key="2">
    <citation type="journal article" date="2005" name="Science">
        <title>The transcriptional landscape of the mammalian genome.</title>
        <authorList>
            <person name="Carninci P."/>
            <person name="Kasukawa T."/>
            <person name="Katayama S."/>
            <person name="Gough J."/>
            <person name="Frith M.C."/>
            <person name="Maeda N."/>
            <person name="Oyama R."/>
            <person name="Ravasi T."/>
            <person name="Lenhard B."/>
            <person name="Wells C."/>
            <person name="Kodzius R."/>
            <person name="Shimokawa K."/>
            <person name="Bajic V.B."/>
            <person name="Brenner S.E."/>
            <person name="Batalov S."/>
            <person name="Forrest A.R."/>
            <person name="Zavolan M."/>
            <person name="Davis M.J."/>
            <person name="Wilming L.G."/>
            <person name="Aidinis V."/>
            <person name="Allen J.E."/>
            <person name="Ambesi-Impiombato A."/>
            <person name="Apweiler R."/>
            <person name="Aturaliya R.N."/>
            <person name="Bailey T.L."/>
            <person name="Bansal M."/>
            <person name="Baxter L."/>
            <person name="Beisel K.W."/>
            <person name="Bersano T."/>
            <person name="Bono H."/>
            <person name="Chalk A.M."/>
            <person name="Chiu K.P."/>
            <person name="Choudhary V."/>
            <person name="Christoffels A."/>
            <person name="Clutterbuck D.R."/>
            <person name="Crowe M.L."/>
            <person name="Dalla E."/>
            <person name="Dalrymple B.P."/>
            <person name="de Bono B."/>
            <person name="Della Gatta G."/>
            <person name="di Bernardo D."/>
            <person name="Down T."/>
            <person name="Engstrom P."/>
            <person name="Fagiolini M."/>
            <person name="Faulkner G."/>
            <person name="Fletcher C.F."/>
            <person name="Fukushima T."/>
            <person name="Furuno M."/>
            <person name="Futaki S."/>
            <person name="Gariboldi M."/>
            <person name="Georgii-Hemming P."/>
            <person name="Gingeras T.R."/>
            <person name="Gojobori T."/>
            <person name="Green R.E."/>
            <person name="Gustincich S."/>
            <person name="Harbers M."/>
            <person name="Hayashi Y."/>
            <person name="Hensch T.K."/>
            <person name="Hirokawa N."/>
            <person name="Hill D."/>
            <person name="Huminiecki L."/>
            <person name="Iacono M."/>
            <person name="Ikeo K."/>
            <person name="Iwama A."/>
            <person name="Ishikawa T."/>
            <person name="Jakt M."/>
            <person name="Kanapin A."/>
            <person name="Katoh M."/>
            <person name="Kawasawa Y."/>
            <person name="Kelso J."/>
            <person name="Kitamura H."/>
            <person name="Kitano H."/>
            <person name="Kollias G."/>
            <person name="Krishnan S.P."/>
            <person name="Kruger A."/>
            <person name="Kummerfeld S.K."/>
            <person name="Kurochkin I.V."/>
            <person name="Lareau L.F."/>
            <person name="Lazarevic D."/>
            <person name="Lipovich L."/>
            <person name="Liu J."/>
            <person name="Liuni S."/>
            <person name="McWilliam S."/>
            <person name="Madan Babu M."/>
            <person name="Madera M."/>
            <person name="Marchionni L."/>
            <person name="Matsuda H."/>
            <person name="Matsuzawa S."/>
            <person name="Miki H."/>
            <person name="Mignone F."/>
            <person name="Miyake S."/>
            <person name="Morris K."/>
            <person name="Mottagui-Tabar S."/>
            <person name="Mulder N."/>
            <person name="Nakano N."/>
            <person name="Nakauchi H."/>
            <person name="Ng P."/>
            <person name="Nilsson R."/>
            <person name="Nishiguchi S."/>
            <person name="Nishikawa S."/>
            <person name="Nori F."/>
            <person name="Ohara O."/>
            <person name="Okazaki Y."/>
            <person name="Orlando V."/>
            <person name="Pang K.C."/>
            <person name="Pavan W.J."/>
            <person name="Pavesi G."/>
            <person name="Pesole G."/>
            <person name="Petrovsky N."/>
            <person name="Piazza S."/>
            <person name="Reed J."/>
            <person name="Reid J.F."/>
            <person name="Ring B.Z."/>
            <person name="Ringwald M."/>
            <person name="Rost B."/>
            <person name="Ruan Y."/>
            <person name="Salzberg S.L."/>
            <person name="Sandelin A."/>
            <person name="Schneider C."/>
            <person name="Schoenbach C."/>
            <person name="Sekiguchi K."/>
            <person name="Semple C.A."/>
            <person name="Seno S."/>
            <person name="Sessa L."/>
            <person name="Sheng Y."/>
            <person name="Shibata Y."/>
            <person name="Shimada H."/>
            <person name="Shimada K."/>
            <person name="Silva D."/>
            <person name="Sinclair B."/>
            <person name="Sperling S."/>
            <person name="Stupka E."/>
            <person name="Sugiura K."/>
            <person name="Sultana R."/>
            <person name="Takenaka Y."/>
            <person name="Taki K."/>
            <person name="Tammoja K."/>
            <person name="Tan S.L."/>
            <person name="Tang S."/>
            <person name="Taylor M.S."/>
            <person name="Tegner J."/>
            <person name="Teichmann S.A."/>
            <person name="Ueda H.R."/>
            <person name="van Nimwegen E."/>
            <person name="Verardo R."/>
            <person name="Wei C.L."/>
            <person name="Yagi K."/>
            <person name="Yamanishi H."/>
            <person name="Zabarovsky E."/>
            <person name="Zhu S."/>
            <person name="Zimmer A."/>
            <person name="Hide W."/>
            <person name="Bult C."/>
            <person name="Grimmond S.M."/>
            <person name="Teasdale R.D."/>
            <person name="Liu E.T."/>
            <person name="Brusic V."/>
            <person name="Quackenbush J."/>
            <person name="Wahlestedt C."/>
            <person name="Mattick J.S."/>
            <person name="Hume D.A."/>
            <person name="Kai C."/>
            <person name="Sasaki D."/>
            <person name="Tomaru Y."/>
            <person name="Fukuda S."/>
            <person name="Kanamori-Katayama M."/>
            <person name="Suzuki M."/>
            <person name="Aoki J."/>
            <person name="Arakawa T."/>
            <person name="Iida J."/>
            <person name="Imamura K."/>
            <person name="Itoh M."/>
            <person name="Kato T."/>
            <person name="Kawaji H."/>
            <person name="Kawagashira N."/>
            <person name="Kawashima T."/>
            <person name="Kojima M."/>
            <person name="Kondo S."/>
            <person name="Konno H."/>
            <person name="Nakano K."/>
            <person name="Ninomiya N."/>
            <person name="Nishio T."/>
            <person name="Okada M."/>
            <person name="Plessy C."/>
            <person name="Shibata K."/>
            <person name="Shiraki T."/>
            <person name="Suzuki S."/>
            <person name="Tagami M."/>
            <person name="Waki K."/>
            <person name="Watahiki A."/>
            <person name="Okamura-Oho Y."/>
            <person name="Suzuki H."/>
            <person name="Kawai J."/>
            <person name="Hayashizaki Y."/>
        </authorList>
    </citation>
    <scope>NUCLEOTIDE SEQUENCE [LARGE SCALE MRNA]</scope>
    <source>
        <strain>C57BL/6J</strain>
        <tissue>Egg</tissue>
        <tissue>Kidney</tissue>
    </source>
</reference>
<reference key="3">
    <citation type="journal article" date="2004" name="Genome Res.">
        <title>The status, quality, and expansion of the NIH full-length cDNA project: the Mammalian Gene Collection (MGC).</title>
        <authorList>
            <consortium name="The MGC Project Team"/>
        </authorList>
    </citation>
    <scope>NUCLEOTIDE SEQUENCE [LARGE SCALE MRNA]</scope>
    <source>
        <strain>FVB/N</strain>
        <tissue>Mammary tumor</tissue>
    </source>
</reference>
<reference key="4">
    <citation type="journal article" date="1997" name="Mol. Cell. Biol.">
        <title>HEC, a novel nuclear protein rich in leucine heptad repeats specifically involved in mitosis.</title>
        <authorList>
            <person name="Chen Y."/>
            <person name="Riley D.J."/>
            <person name="Chen P.-L."/>
            <person name="Lee W.-H."/>
        </authorList>
    </citation>
    <scope>TISSUE SPECIFICITY</scope>
</reference>
<reference key="5">
    <citation type="journal article" date="2010" name="Cell">
        <title>A tissue-specific atlas of mouse protein phosphorylation and expression.</title>
        <authorList>
            <person name="Huttlin E.L."/>
            <person name="Jedrychowski M.P."/>
            <person name="Elias J.E."/>
            <person name="Goswami T."/>
            <person name="Rad R."/>
            <person name="Beausoleil S.A."/>
            <person name="Villen J."/>
            <person name="Haas W."/>
            <person name="Sowa M.E."/>
            <person name="Gygi S.P."/>
        </authorList>
    </citation>
    <scope>PHOSPHORYLATION [LARGE SCALE ANALYSIS] AT SER-242</scope>
    <scope>IDENTIFICATION BY MASS SPECTROMETRY [LARGE SCALE ANALYSIS]</scope>
    <source>
        <tissue>Spleen</tissue>
        <tissue>Testis</tissue>
    </source>
</reference>
<dbReference type="EMBL" id="AF326730">
    <property type="protein sequence ID" value="AAK01425.1"/>
    <property type="molecule type" value="mRNA"/>
</dbReference>
<dbReference type="EMBL" id="AK011497">
    <property type="protein sequence ID" value="BAB27657.1"/>
    <property type="molecule type" value="mRNA"/>
</dbReference>
<dbReference type="EMBL" id="AK136236">
    <property type="protein sequence ID" value="BAE22889.1"/>
    <property type="molecule type" value="mRNA"/>
</dbReference>
<dbReference type="EMBL" id="AK163317">
    <property type="protein sequence ID" value="BAE37296.1"/>
    <property type="molecule type" value="mRNA"/>
</dbReference>
<dbReference type="EMBL" id="AK169427">
    <property type="protein sequence ID" value="BAE41169.1"/>
    <property type="molecule type" value="mRNA"/>
</dbReference>
<dbReference type="EMBL" id="BC020131">
    <property type="protein sequence ID" value="AAH20131.1"/>
    <property type="molecule type" value="mRNA"/>
</dbReference>
<dbReference type="CCDS" id="CCDS28959.1"/>
<dbReference type="RefSeq" id="NP_075783.2">
    <property type="nucleotide sequence ID" value="NM_023294.2"/>
</dbReference>
<dbReference type="SMR" id="Q9D0F1"/>
<dbReference type="BioGRID" id="211904">
    <property type="interactions" value="57"/>
</dbReference>
<dbReference type="ComplexPortal" id="CPX-551">
    <property type="entry name" value="Ndc80 complex"/>
</dbReference>
<dbReference type="FunCoup" id="Q9D0F1">
    <property type="interactions" value="1337"/>
</dbReference>
<dbReference type="IntAct" id="Q9D0F1">
    <property type="interactions" value="54"/>
</dbReference>
<dbReference type="MINT" id="Q9D0F1"/>
<dbReference type="STRING" id="10090.ENSMUSP00000024851"/>
<dbReference type="GlyGen" id="Q9D0F1">
    <property type="glycosylation" value="1 site, 1 O-linked glycan (1 site)"/>
</dbReference>
<dbReference type="iPTMnet" id="Q9D0F1"/>
<dbReference type="PhosphoSitePlus" id="Q9D0F1"/>
<dbReference type="PaxDb" id="10090-ENSMUSP00000024851"/>
<dbReference type="PeptideAtlas" id="Q9D0F1"/>
<dbReference type="ProteomicsDB" id="293637"/>
<dbReference type="Pumba" id="Q9D0F1"/>
<dbReference type="Antibodypedia" id="6039">
    <property type="antibodies" value="458 antibodies from 39 providers"/>
</dbReference>
<dbReference type="DNASU" id="67052"/>
<dbReference type="Ensembl" id="ENSMUST00000024851.10">
    <property type="protein sequence ID" value="ENSMUSP00000024851.10"/>
    <property type="gene ID" value="ENSMUSG00000024056.11"/>
</dbReference>
<dbReference type="GeneID" id="67052"/>
<dbReference type="KEGG" id="mmu:67052"/>
<dbReference type="UCSC" id="uc008dmk.2">
    <property type="organism name" value="mouse"/>
</dbReference>
<dbReference type="AGR" id="MGI:1914302"/>
<dbReference type="CTD" id="10403"/>
<dbReference type="MGI" id="MGI:1914302">
    <property type="gene designation" value="Ndc80"/>
</dbReference>
<dbReference type="VEuPathDB" id="HostDB:ENSMUSG00000024056"/>
<dbReference type="eggNOG" id="KOG0995">
    <property type="taxonomic scope" value="Eukaryota"/>
</dbReference>
<dbReference type="GeneTree" id="ENSGT00390000018386"/>
<dbReference type="HOGENOM" id="CLU_012583_2_0_1"/>
<dbReference type="InParanoid" id="Q9D0F1"/>
<dbReference type="OMA" id="PSHKFQK"/>
<dbReference type="OrthoDB" id="7459479at2759"/>
<dbReference type="PhylomeDB" id="Q9D0F1"/>
<dbReference type="TreeFam" id="TF101177"/>
<dbReference type="Reactome" id="R-MMU-141444">
    <property type="pathway name" value="Amplification of signal from unattached kinetochores via a MAD2 inhibitory signal"/>
</dbReference>
<dbReference type="Reactome" id="R-MMU-2467813">
    <property type="pathway name" value="Separation of Sister Chromatids"/>
</dbReference>
<dbReference type="Reactome" id="R-MMU-2500257">
    <property type="pathway name" value="Resolution of Sister Chromatid Cohesion"/>
</dbReference>
<dbReference type="Reactome" id="R-MMU-5663220">
    <property type="pathway name" value="RHO GTPases Activate Formins"/>
</dbReference>
<dbReference type="Reactome" id="R-MMU-68877">
    <property type="pathway name" value="Mitotic Prometaphase"/>
</dbReference>
<dbReference type="Reactome" id="R-MMU-9648025">
    <property type="pathway name" value="EML4 and NUDC in mitotic spindle formation"/>
</dbReference>
<dbReference type="BioGRID-ORCS" id="67052">
    <property type="hits" value="27 hits in 76 CRISPR screens"/>
</dbReference>
<dbReference type="ChiTaRS" id="Ndc80">
    <property type="organism name" value="mouse"/>
</dbReference>
<dbReference type="PRO" id="PR:Q9D0F1"/>
<dbReference type="Proteomes" id="UP000000589">
    <property type="component" value="Chromosome 17"/>
</dbReference>
<dbReference type="RNAct" id="Q9D0F1">
    <property type="molecule type" value="protein"/>
</dbReference>
<dbReference type="Bgee" id="ENSMUSG00000024056">
    <property type="expression patterns" value="Expressed in humerus cartilage element and 135 other cell types or tissues"/>
</dbReference>
<dbReference type="ExpressionAtlas" id="Q9D0F1">
    <property type="expression patterns" value="baseline and differential"/>
</dbReference>
<dbReference type="GO" id="GO:0005813">
    <property type="term" value="C:centrosome"/>
    <property type="evidence" value="ECO:0000314"/>
    <property type="project" value="MGI"/>
</dbReference>
<dbReference type="GO" id="GO:0000775">
    <property type="term" value="C:chromosome, centromeric region"/>
    <property type="evidence" value="ECO:0000266"/>
    <property type="project" value="MGI"/>
</dbReference>
<dbReference type="GO" id="GO:0005737">
    <property type="term" value="C:cytoplasm"/>
    <property type="evidence" value="ECO:0000314"/>
    <property type="project" value="MGI"/>
</dbReference>
<dbReference type="GO" id="GO:0005829">
    <property type="term" value="C:cytosol"/>
    <property type="evidence" value="ECO:0007669"/>
    <property type="project" value="Ensembl"/>
</dbReference>
<dbReference type="GO" id="GO:0000776">
    <property type="term" value="C:kinetochore"/>
    <property type="evidence" value="ECO:0000314"/>
    <property type="project" value="MGI"/>
</dbReference>
<dbReference type="GO" id="GO:0031262">
    <property type="term" value="C:Ndc80 complex"/>
    <property type="evidence" value="ECO:0000250"/>
    <property type="project" value="UniProtKB"/>
</dbReference>
<dbReference type="GO" id="GO:0016607">
    <property type="term" value="C:nuclear speck"/>
    <property type="evidence" value="ECO:0007669"/>
    <property type="project" value="Ensembl"/>
</dbReference>
<dbReference type="GO" id="GO:0005634">
    <property type="term" value="C:nucleus"/>
    <property type="evidence" value="ECO:0000266"/>
    <property type="project" value="MGI"/>
</dbReference>
<dbReference type="GO" id="GO:0030332">
    <property type="term" value="F:cyclin binding"/>
    <property type="evidence" value="ECO:0000353"/>
    <property type="project" value="MGI"/>
</dbReference>
<dbReference type="GO" id="GO:0042802">
    <property type="term" value="F:identical protein binding"/>
    <property type="evidence" value="ECO:0007669"/>
    <property type="project" value="Ensembl"/>
</dbReference>
<dbReference type="GO" id="GO:0140483">
    <property type="term" value="F:kinetochore adaptor activity"/>
    <property type="evidence" value="ECO:0000250"/>
    <property type="project" value="UniProtKB"/>
</dbReference>
<dbReference type="GO" id="GO:0008017">
    <property type="term" value="F:microtubule binding"/>
    <property type="evidence" value="ECO:0000250"/>
    <property type="project" value="UniProtKB"/>
</dbReference>
<dbReference type="GO" id="GO:0051315">
    <property type="term" value="P:attachment of mitotic spindle microtubules to kinetochore"/>
    <property type="evidence" value="ECO:0000250"/>
    <property type="project" value="UniProtKB"/>
</dbReference>
<dbReference type="GO" id="GO:0008608">
    <property type="term" value="P:attachment of spindle microtubules to kinetochore"/>
    <property type="evidence" value="ECO:0000266"/>
    <property type="project" value="ComplexPortal"/>
</dbReference>
<dbReference type="GO" id="GO:0051301">
    <property type="term" value="P:cell division"/>
    <property type="evidence" value="ECO:0007669"/>
    <property type="project" value="UniProtKB-KW"/>
</dbReference>
<dbReference type="GO" id="GO:0051298">
    <property type="term" value="P:centrosome duplication"/>
    <property type="evidence" value="ECO:0000266"/>
    <property type="project" value="MGI"/>
</dbReference>
<dbReference type="GO" id="GO:0007059">
    <property type="term" value="P:chromosome segregation"/>
    <property type="evidence" value="ECO:0000250"/>
    <property type="project" value="UniProtKB"/>
</dbReference>
<dbReference type="GO" id="GO:0000132">
    <property type="term" value="P:establishment of mitotic spindle orientation"/>
    <property type="evidence" value="ECO:0007669"/>
    <property type="project" value="Ensembl"/>
</dbReference>
<dbReference type="GO" id="GO:0008315">
    <property type="term" value="P:G2/MI transition of meiotic cell cycle"/>
    <property type="evidence" value="ECO:0000314"/>
    <property type="project" value="MGI"/>
</dbReference>
<dbReference type="GO" id="GO:0051383">
    <property type="term" value="P:kinetochore organization"/>
    <property type="evidence" value="ECO:0000315"/>
    <property type="project" value="MGI"/>
</dbReference>
<dbReference type="GO" id="GO:0051310">
    <property type="term" value="P:metaphase chromosome alignment"/>
    <property type="evidence" value="ECO:0000250"/>
    <property type="project" value="UniProtKB"/>
</dbReference>
<dbReference type="GO" id="GO:0000070">
    <property type="term" value="P:mitotic sister chromatid segregation"/>
    <property type="evidence" value="ECO:0000266"/>
    <property type="project" value="MGI"/>
</dbReference>
<dbReference type="GO" id="GO:0007094">
    <property type="term" value="P:mitotic spindle assembly checkpoint signaling"/>
    <property type="evidence" value="ECO:0000303"/>
    <property type="project" value="ComplexPortal"/>
</dbReference>
<dbReference type="GO" id="GO:0007052">
    <property type="term" value="P:mitotic spindle organization"/>
    <property type="evidence" value="ECO:0000250"/>
    <property type="project" value="UniProtKB"/>
</dbReference>
<dbReference type="GO" id="GO:0090267">
    <property type="term" value="P:positive regulation of mitotic cell cycle spindle assembly checkpoint"/>
    <property type="evidence" value="ECO:0000250"/>
    <property type="project" value="UniProtKB"/>
</dbReference>
<dbReference type="GO" id="GO:0031647">
    <property type="term" value="P:regulation of protein stability"/>
    <property type="evidence" value="ECO:0000315"/>
    <property type="project" value="MGI"/>
</dbReference>
<dbReference type="GO" id="GO:0014841">
    <property type="term" value="P:skeletal muscle satellite cell proliferation"/>
    <property type="evidence" value="ECO:0000315"/>
    <property type="project" value="MGI"/>
</dbReference>
<dbReference type="GO" id="GO:0007057">
    <property type="term" value="P:spindle assembly involved in female meiosis I"/>
    <property type="evidence" value="ECO:0000315"/>
    <property type="project" value="MGI"/>
</dbReference>
<dbReference type="FunFam" id="1.10.418.30:FF:000002">
    <property type="entry name" value="NDC80, kinetochore complex component"/>
    <property type="match status" value="1"/>
</dbReference>
<dbReference type="Gene3D" id="6.10.250.1950">
    <property type="match status" value="1"/>
</dbReference>
<dbReference type="Gene3D" id="1.10.418.30">
    <property type="entry name" value="Ncd80 complex, Ncd80 subunit"/>
    <property type="match status" value="1"/>
</dbReference>
<dbReference type="InterPro" id="IPR040967">
    <property type="entry name" value="DUF5595"/>
</dbReference>
<dbReference type="InterPro" id="IPR005550">
    <property type="entry name" value="Kinetochore_Ndc80"/>
</dbReference>
<dbReference type="InterPro" id="IPR055260">
    <property type="entry name" value="Ndc80_CH"/>
</dbReference>
<dbReference type="InterPro" id="IPR038273">
    <property type="entry name" value="Ndc80_sf"/>
</dbReference>
<dbReference type="PANTHER" id="PTHR10643">
    <property type="entry name" value="KINETOCHORE PROTEIN NDC80"/>
    <property type="match status" value="1"/>
</dbReference>
<dbReference type="PANTHER" id="PTHR10643:SF2">
    <property type="entry name" value="KINETOCHORE PROTEIN NDC80 HOMOLOG"/>
    <property type="match status" value="1"/>
</dbReference>
<dbReference type="Pfam" id="PF18077">
    <property type="entry name" value="DUF5595"/>
    <property type="match status" value="1"/>
</dbReference>
<dbReference type="Pfam" id="PF03801">
    <property type="entry name" value="Ndc80_HEC"/>
    <property type="match status" value="1"/>
</dbReference>
<dbReference type="Pfam" id="PF24487">
    <property type="entry name" value="NDC80_loop"/>
    <property type="match status" value="1"/>
</dbReference>
<sequence>MKRSSVSTCGAGRLSMQELRTLDLNKPGLYTPQTKERSTFGKLSTHKPTSERKVSIFGKRTSGHGSRNSQLGIFSSSEKIKDPRPLNDKAFIQQCIRQLYEFLTENGYVYSVSMKSLQAPSTKEFLKIFAFLYGFLCPSYELPGTKCEEEVPRIFKALGYPFTLSKSSMYTVGAPHTWPHIVAALVWLIDCIKIDTAMKESSPLFDDGQLWGEETEDGIKHNKLFLEYTKKCYEKFMTGADSFEEEDAELQAKLKDLYKVDASKLESLEAENKALNEQIARLEEEREREPNRLMSLKKLKASLQADVQNYKAYMSNLESHLAVLKQKSNSLDEEIGRVEQECETVKQENTRLQSIVDNQKYSVADIERINHEKNELQQTINKLTKDLEAEQQQMWNEELKYARGKEAIEAQLAEYHKLARKLKLIPKGAENSKGYDFEIKFNPEAGANCLVKYRTQVYAPLKELLNESEEEINKALNKKRHLEDTLEQLNTMKTESKNTVRMLKEEIQKLDDLHQQAVKEAEEKDKKSASELESLEKHKHLLESGVNDGLSEAMDELDAVQREYQLTVKTTTEERRKVENNLQRLLEMVATHVGSLEKHLEEENAKADREYEEFMSEDLLENIREMAEKYKRNAAQLKAPDK</sequence>
<proteinExistence type="evidence at protein level"/>
<feature type="chain" id="PRO_0000249552" description="Kinetochore protein NDC80 homolog">
    <location>
        <begin position="1"/>
        <end position="642"/>
    </location>
</feature>
<feature type="region of interest" description="Interaction with the N-terminus of CDCA1" evidence="1">
    <location>
        <begin position="1"/>
        <end position="445"/>
    </location>
</feature>
<feature type="region of interest" description="Nuclear localization" evidence="1">
    <location>
        <begin position="1"/>
        <end position="250"/>
    </location>
</feature>
<feature type="region of interest" description="Interaction with RB1" evidence="1">
    <location>
        <begin position="128"/>
        <end position="251"/>
    </location>
</feature>
<feature type="region of interest" description="Interaction with NEK2 and ZWINT" evidence="1">
    <location>
        <begin position="251"/>
        <end position="618"/>
    </location>
</feature>
<feature type="region of interest" description="Interaction with SMC1A" evidence="1">
    <location>
        <begin position="251"/>
        <end position="431"/>
    </location>
</feature>
<feature type="region of interest" description="Interaction with PSMC2 and SMC1A" evidence="1">
    <location>
        <begin position="361"/>
        <end position="547"/>
    </location>
</feature>
<feature type="region of interest" description="Interaction with the C-terminus of CDCA1 and the SPBC24-SPBC25 subcomplex" evidence="1">
    <location>
        <begin position="446"/>
        <end position="642"/>
    </location>
</feature>
<feature type="coiled-coil region" evidence="2">
    <location>
        <begin position="240"/>
        <end position="403"/>
    </location>
</feature>
<feature type="coiled-coil region" evidence="2">
    <location>
        <begin position="458"/>
        <end position="639"/>
    </location>
</feature>
<feature type="modified residue" description="Phosphoserine" evidence="1">
    <location>
        <position position="44"/>
    </location>
</feature>
<feature type="modified residue" description="N6-acetyllysine" evidence="1">
    <location>
        <position position="53"/>
    </location>
</feature>
<feature type="modified residue" description="Phosphoserine" evidence="1">
    <location>
        <position position="55"/>
    </location>
</feature>
<feature type="modified residue" description="N6-acetyllysine" evidence="1">
    <location>
        <position position="59"/>
    </location>
</feature>
<feature type="modified residue" description="Phosphoserine" evidence="1">
    <location>
        <position position="62"/>
    </location>
</feature>
<feature type="modified residue" description="Phosphoserine" evidence="1">
    <location>
        <position position="69"/>
    </location>
</feature>
<feature type="modified residue" description="Phosphoserine; by NEK2" evidence="1">
    <location>
        <position position="165"/>
    </location>
</feature>
<feature type="modified residue" description="Phosphoserine" evidence="5">
    <location>
        <position position="242"/>
    </location>
</feature>
<feature type="modified residue" description="N6-acetyllysine" evidence="1">
    <location>
        <position position="527"/>
    </location>
</feature>
<feature type="sequence conflict" description="In Ref. 2; BAE37296." evidence="4" ref="2">
    <original>R</original>
    <variation>S</variation>
    <location>
        <position position="13"/>
    </location>
</feature>
<feature type="sequence conflict" description="In Ref. 1; AAK01425." evidence="4" ref="1">
    <original>A</original>
    <variation>E</variation>
    <location>
        <position position="274"/>
    </location>
</feature>
<name>NDC80_MOUSE</name>